<comment type="subcellular location">
    <subcellularLocation>
        <location>Mitochondrion</location>
    </subcellularLocation>
</comment>
<comment type="similarity">
    <text evidence="3">Belongs to the heat shock protein 70 family.</text>
</comment>
<evidence type="ECO:0000250" key="1"/>
<evidence type="ECO:0000256" key="2">
    <source>
        <dbReference type="SAM" id="MobiDB-lite"/>
    </source>
</evidence>
<evidence type="ECO:0000305" key="3"/>
<proteinExistence type="evidence at transcript level"/>
<organism>
    <name type="scientific">Solanum tuberosum</name>
    <name type="common">Potato</name>
    <dbReference type="NCBI Taxonomy" id="4113"/>
    <lineage>
        <taxon>Eukaryota</taxon>
        <taxon>Viridiplantae</taxon>
        <taxon>Streptophyta</taxon>
        <taxon>Embryophyta</taxon>
        <taxon>Tracheophyta</taxon>
        <taxon>Spermatophyta</taxon>
        <taxon>Magnoliopsida</taxon>
        <taxon>eudicotyledons</taxon>
        <taxon>Gunneridae</taxon>
        <taxon>Pentapetalae</taxon>
        <taxon>asterids</taxon>
        <taxon>lamiids</taxon>
        <taxon>Solanales</taxon>
        <taxon>Solanaceae</taxon>
        <taxon>Solanoideae</taxon>
        <taxon>Solaneae</taxon>
        <taxon>Solanum</taxon>
    </lineage>
</organism>
<keyword id="KW-0067">ATP-binding</keyword>
<keyword id="KW-0496">Mitochondrion</keyword>
<keyword id="KW-0547">Nucleotide-binding</keyword>
<keyword id="KW-1185">Reference proteome</keyword>
<keyword id="KW-0346">Stress response</keyword>
<keyword id="KW-0809">Transit peptide</keyword>
<feature type="transit peptide" description="Mitochondrion" evidence="1">
    <location>
        <begin position="1"/>
        <end position="57"/>
    </location>
</feature>
<feature type="chain" id="PRO_0000013549" description="Heat shock 70 kDa protein, mitochondrial">
    <location>
        <begin position="58"/>
        <end position="682"/>
    </location>
</feature>
<feature type="region of interest" description="Disordered" evidence="2">
    <location>
        <begin position="649"/>
        <end position="682"/>
    </location>
</feature>
<feature type="compositionally biased region" description="Gly residues" evidence="2">
    <location>
        <begin position="655"/>
        <end position="668"/>
    </location>
</feature>
<feature type="compositionally biased region" description="Acidic residues" evidence="2">
    <location>
        <begin position="673"/>
        <end position="682"/>
    </location>
</feature>
<sequence>MATAALLRSLRRREFATSSISAYRTLASNTKPSWCPSLVGAKWAGLARPFSSKPAGNEIIGIDLGTTNSCVAVMEGKNPKVIENSEGARTTPSVVAFNQKGELLVGTPAKRQAVTNPTNTLSGTKRLIGRRFDDPQTQKEMKMVPYKIVRGSNGDAWVEANGQQYSPTQIGAFILTKMKETAEAYLGKSINKAVITVPAYFNDAQRQAIKDAGAIAGLDVQRIINEPTAAALSYGMNSKEGLVAVFDLGGGTFDVSILEISNGVFEVKATNGDTFLGGEDFDNALLEFLVSEFKRTEGIDLSKDKLALQRLREAAEKAKIELSSTSQTDINLPFITADASGAKHLNITLTRSKFETLVNHLIERTRNPCKNCLKDAGVSLKDVDEVLLVGGMTRVPKVQEIVSEIFGKSPSKGVNPDEAVAMGAALQGGILRGDVKELLLLDVTPLARGIETLGGIFTRLINRNTTIPTKKSQVFSTAADNQTQVGIKVLQGEREMASDNKLLGEFDLVGIPPAPKGYCPQIEVIFDIDANGMVTVSAKDKATSKEQQITIRSSGGLSEDEIDKMVREAEMHAQRIKNARHLLISGIVQSTTIYSIEKSLSEYKEKVPKEVVTEIETAISDLRAAMGTENIDDIKAKLDAANKAVSKIGEHMAGGSSGGASGGGGAQGGDQPPEAEYEEVKK</sequence>
<protein>
    <recommendedName>
        <fullName>Heat shock 70 kDa protein, mitochondrial</fullName>
    </recommendedName>
</protein>
<reference key="1">
    <citation type="journal article" date="1993" name="Planta">
        <title>HSP68 -- a DnaK-like heat-stress protein of plant mitochondria.</title>
        <authorList>
            <person name="Neumann D."/>
            <person name="Emmermann M."/>
            <person name="Thierfelder J.M."/>
            <person name="zur Nieden U."/>
            <person name="Clericus M."/>
            <person name="Braun H.P."/>
            <person name="Nover L."/>
            <person name="Schmitz U.K."/>
        </authorList>
    </citation>
    <scope>NUCLEOTIDE SEQUENCE [MRNA]</scope>
</reference>
<accession>Q08276</accession>
<name>HSP7M_SOLTU</name>
<gene>
    <name type="primary">HSP68</name>
</gene>
<dbReference type="EMBL" id="S59747">
    <property type="protein sequence ID" value="AAC60559.2"/>
    <property type="molecule type" value="mRNA"/>
</dbReference>
<dbReference type="PIR" id="T07024">
    <property type="entry name" value="T07024"/>
</dbReference>
<dbReference type="RefSeq" id="NP_001305489.1">
    <property type="nucleotide sequence ID" value="NM_001318560.1"/>
</dbReference>
<dbReference type="SMR" id="Q08276"/>
<dbReference type="FunCoup" id="Q08276">
    <property type="interactions" value="2277"/>
</dbReference>
<dbReference type="IntAct" id="Q08276">
    <property type="interactions" value="1"/>
</dbReference>
<dbReference type="STRING" id="4113.Q08276"/>
<dbReference type="PaxDb" id="4113-PGSC0003DMT400027703"/>
<dbReference type="ProMEX" id="Q08276"/>
<dbReference type="GeneID" id="102582209"/>
<dbReference type="KEGG" id="sot:102582209"/>
<dbReference type="eggNOG" id="KOG0102">
    <property type="taxonomic scope" value="Eukaryota"/>
</dbReference>
<dbReference type="InParanoid" id="Q08276"/>
<dbReference type="OrthoDB" id="2401965at2759"/>
<dbReference type="Proteomes" id="UP000011115">
    <property type="component" value="Unassembled WGS sequence"/>
</dbReference>
<dbReference type="ExpressionAtlas" id="Q08276">
    <property type="expression patterns" value="baseline and differential"/>
</dbReference>
<dbReference type="GO" id="GO:0005737">
    <property type="term" value="C:cytoplasm"/>
    <property type="evidence" value="ECO:0000318"/>
    <property type="project" value="GO_Central"/>
</dbReference>
<dbReference type="GO" id="GO:0005739">
    <property type="term" value="C:mitochondrion"/>
    <property type="evidence" value="ECO:0000318"/>
    <property type="project" value="GO_Central"/>
</dbReference>
<dbReference type="GO" id="GO:0005524">
    <property type="term" value="F:ATP binding"/>
    <property type="evidence" value="ECO:0007669"/>
    <property type="project" value="UniProtKB-KW"/>
</dbReference>
<dbReference type="GO" id="GO:0016887">
    <property type="term" value="F:ATP hydrolysis activity"/>
    <property type="evidence" value="ECO:0000318"/>
    <property type="project" value="GO_Central"/>
</dbReference>
<dbReference type="GO" id="GO:0140662">
    <property type="term" value="F:ATP-dependent protein folding chaperone"/>
    <property type="evidence" value="ECO:0007669"/>
    <property type="project" value="InterPro"/>
</dbReference>
<dbReference type="GO" id="GO:0031072">
    <property type="term" value="F:heat shock protein binding"/>
    <property type="evidence" value="ECO:0000318"/>
    <property type="project" value="GO_Central"/>
</dbReference>
<dbReference type="GO" id="GO:0044183">
    <property type="term" value="F:protein folding chaperone"/>
    <property type="evidence" value="ECO:0000318"/>
    <property type="project" value="GO_Central"/>
</dbReference>
<dbReference type="GO" id="GO:0051082">
    <property type="term" value="F:unfolded protein binding"/>
    <property type="evidence" value="ECO:0007669"/>
    <property type="project" value="InterPro"/>
</dbReference>
<dbReference type="GO" id="GO:0051085">
    <property type="term" value="P:chaperone cofactor-dependent protein refolding"/>
    <property type="evidence" value="ECO:0000318"/>
    <property type="project" value="GO_Central"/>
</dbReference>
<dbReference type="GO" id="GO:0016226">
    <property type="term" value="P:iron-sulfur cluster assembly"/>
    <property type="evidence" value="ECO:0000318"/>
    <property type="project" value="GO_Central"/>
</dbReference>
<dbReference type="GO" id="GO:0042026">
    <property type="term" value="P:protein refolding"/>
    <property type="evidence" value="ECO:0000318"/>
    <property type="project" value="GO_Central"/>
</dbReference>
<dbReference type="CDD" id="cd11733">
    <property type="entry name" value="ASKHA_NBD_HSP70_HSPA9"/>
    <property type="match status" value="1"/>
</dbReference>
<dbReference type="FunFam" id="2.60.34.10:FF:000014">
    <property type="entry name" value="Chaperone protein DnaK HSP70"/>
    <property type="match status" value="1"/>
</dbReference>
<dbReference type="FunFam" id="3.30.420.40:FF:000020">
    <property type="entry name" value="Chaperone protein HscA homolog"/>
    <property type="match status" value="1"/>
</dbReference>
<dbReference type="FunFam" id="3.30.30.30:FF:000003">
    <property type="entry name" value="Heat shock protein 9"/>
    <property type="match status" value="1"/>
</dbReference>
<dbReference type="FunFam" id="1.20.1270.10:FF:000001">
    <property type="entry name" value="Molecular chaperone DnaK"/>
    <property type="match status" value="1"/>
</dbReference>
<dbReference type="FunFam" id="3.30.420.40:FF:000004">
    <property type="entry name" value="Molecular chaperone DnaK"/>
    <property type="match status" value="1"/>
</dbReference>
<dbReference type="FunFam" id="3.90.640.10:FF:000003">
    <property type="entry name" value="Molecular chaperone DnaK"/>
    <property type="match status" value="1"/>
</dbReference>
<dbReference type="Gene3D" id="1.20.1270.10">
    <property type="match status" value="1"/>
</dbReference>
<dbReference type="Gene3D" id="3.30.420.40">
    <property type="match status" value="2"/>
</dbReference>
<dbReference type="Gene3D" id="3.90.640.10">
    <property type="entry name" value="Actin, Chain A, domain 4"/>
    <property type="match status" value="1"/>
</dbReference>
<dbReference type="Gene3D" id="2.60.34.10">
    <property type="entry name" value="Substrate Binding Domain Of DNAk, Chain A, domain 1"/>
    <property type="match status" value="1"/>
</dbReference>
<dbReference type="HAMAP" id="MF_00332">
    <property type="entry name" value="DnaK"/>
    <property type="match status" value="1"/>
</dbReference>
<dbReference type="InterPro" id="IPR043129">
    <property type="entry name" value="ATPase_NBD"/>
</dbReference>
<dbReference type="InterPro" id="IPR012725">
    <property type="entry name" value="Chaperone_DnaK"/>
</dbReference>
<dbReference type="InterPro" id="IPR018181">
    <property type="entry name" value="Heat_shock_70_CS"/>
</dbReference>
<dbReference type="InterPro" id="IPR029048">
    <property type="entry name" value="HSP70_C_sf"/>
</dbReference>
<dbReference type="InterPro" id="IPR029047">
    <property type="entry name" value="HSP70_peptide-bd_sf"/>
</dbReference>
<dbReference type="InterPro" id="IPR013126">
    <property type="entry name" value="Hsp_70_fam"/>
</dbReference>
<dbReference type="NCBIfam" id="NF001413">
    <property type="entry name" value="PRK00290.1"/>
    <property type="match status" value="1"/>
</dbReference>
<dbReference type="NCBIfam" id="TIGR02350">
    <property type="entry name" value="prok_dnaK"/>
    <property type="match status" value="1"/>
</dbReference>
<dbReference type="PANTHER" id="PTHR19375">
    <property type="entry name" value="HEAT SHOCK PROTEIN 70KDA"/>
    <property type="match status" value="1"/>
</dbReference>
<dbReference type="Pfam" id="PF00012">
    <property type="entry name" value="HSP70"/>
    <property type="match status" value="1"/>
</dbReference>
<dbReference type="PRINTS" id="PR00301">
    <property type="entry name" value="HEATSHOCK70"/>
</dbReference>
<dbReference type="SUPFAM" id="SSF53067">
    <property type="entry name" value="Actin-like ATPase domain"/>
    <property type="match status" value="2"/>
</dbReference>
<dbReference type="SUPFAM" id="SSF100934">
    <property type="entry name" value="Heat shock protein 70kD (HSP70), C-terminal subdomain"/>
    <property type="match status" value="1"/>
</dbReference>
<dbReference type="SUPFAM" id="SSF100920">
    <property type="entry name" value="Heat shock protein 70kD (HSP70), peptide-binding domain"/>
    <property type="match status" value="1"/>
</dbReference>
<dbReference type="PROSITE" id="PS00297">
    <property type="entry name" value="HSP70_1"/>
    <property type="match status" value="1"/>
</dbReference>
<dbReference type="PROSITE" id="PS00329">
    <property type="entry name" value="HSP70_2"/>
    <property type="match status" value="1"/>
</dbReference>
<dbReference type="PROSITE" id="PS01036">
    <property type="entry name" value="HSP70_3"/>
    <property type="match status" value="1"/>
</dbReference>